<comment type="function">
    <text evidence="1">Involved in lipopolysaccharide (LPS) biosynthesis. Translocates lipid A-core from the inner to the outer leaflet of the inner membrane. Transmembrane domains (TMD) form a pore in the inner membrane and the ATP-binding domain (NBD) is responsible for energy generation.</text>
</comment>
<comment type="catalytic activity">
    <reaction evidence="1">
        <text>ATP + H2O + lipid A-core oligosaccharideSide 1 = ADP + phosphate + lipid A-core oligosaccharideSide 2.</text>
        <dbReference type="EC" id="7.5.2.6"/>
    </reaction>
</comment>
<comment type="subunit">
    <text evidence="1">Homodimer.</text>
</comment>
<comment type="subcellular location">
    <subcellularLocation>
        <location evidence="1">Cell inner membrane</location>
        <topology evidence="1">Multi-pass membrane protein</topology>
    </subcellularLocation>
</comment>
<comment type="domain">
    <text evidence="1">In MsbA the ATP-binding domain (NBD) and the transmembrane domain (TMD) are fused.</text>
</comment>
<comment type="similarity">
    <text evidence="1">Belongs to the ABC transporter superfamily. Lipid exporter (TC 3.A.1.106) family.</text>
</comment>
<comment type="sequence caution" evidence="2">
    <conflict type="erroneous initiation">
        <sequence resource="EMBL-CDS" id="AAS61441"/>
    </conflict>
</comment>
<feature type="chain" id="PRO_0000092610" description="ATP-dependent lipid A-core flippase">
    <location>
        <begin position="1"/>
        <end position="582"/>
    </location>
</feature>
<feature type="transmembrane region" description="Helical" evidence="1">
    <location>
        <begin position="25"/>
        <end position="45"/>
    </location>
</feature>
<feature type="transmembrane region" description="Helical" evidence="1">
    <location>
        <begin position="69"/>
        <end position="89"/>
    </location>
</feature>
<feature type="transmembrane region" description="Helical" evidence="1">
    <location>
        <begin position="137"/>
        <end position="159"/>
    </location>
</feature>
<feature type="transmembrane region" description="Helical" evidence="1">
    <location>
        <begin position="253"/>
        <end position="273"/>
    </location>
</feature>
<feature type="transmembrane region" description="Helical" evidence="1">
    <location>
        <begin position="275"/>
        <end position="295"/>
    </location>
</feature>
<feature type="domain" description="ABC transmembrane type-1" evidence="1">
    <location>
        <begin position="28"/>
        <end position="310"/>
    </location>
</feature>
<feature type="domain" description="ABC transporter" evidence="1">
    <location>
        <begin position="342"/>
        <end position="578"/>
    </location>
</feature>
<feature type="binding site" evidence="1">
    <location>
        <begin position="376"/>
        <end position="383"/>
    </location>
    <ligand>
        <name>ATP</name>
        <dbReference type="ChEBI" id="CHEBI:30616"/>
    </ligand>
</feature>
<name>MSBA_YERPE</name>
<accession>Q8ZGA9</accession>
<accession>Q0WH20</accession>
<gene>
    <name evidence="1" type="primary">msbA</name>
    <name type="ordered locus">YPO1395</name>
    <name type="ordered locus">y2777</name>
    <name type="ordered locus">YP_1198</name>
</gene>
<proteinExistence type="inferred from homology"/>
<sequence>MMNDKDLSTWQTFRRLWPTISPYKAGLIVAAIALILNAASDTFMLSLLKPLLDDGFGNSNSSILKWMPLAVIGLMVVRGVTGFVSSYCISWVSGKVVMHIRRRLFSHMMGMPVSFFDQQSTGTLLSRITYDSEQVAASSSSALVTVVREGASIIGLFIMMFYYSWQLSLILIVIAPIVSISIRLVSKRFRNISKNMQNTMGEVTTSAEQMLKGHKEVLIFGGQKVETERFDAVSNRMRQQGMKLVSASSISDPIIQLIASFALALVLYAASFPSVMETLTAGTITVVFSAMIALMRPLKSLTNVNTQFQRGMAACQTLFSILDMEQEKDEGKLEVERAKGDIEFRHVTFYYPGKDTPALNDINIHLEAGKTVALVGRSGSGKSTIANLLTRFYDVSEGSILLDGHDLRDYRLGALRNQVALVSQNVHLFNDTVANNIAYARNEQYSRAEIEEAARMAYAMDFINKMEHGLDTVIGENGIMLSGGQRQRIAIARALLRNCPILILDEATSALDTESERAIQAALDELQKNRTSLVIAHRLSTIEKADEIVVIEDGRIVERGVHAELLVQQGVYAQLNRMQFGQ</sequence>
<organism>
    <name type="scientific">Yersinia pestis</name>
    <dbReference type="NCBI Taxonomy" id="632"/>
    <lineage>
        <taxon>Bacteria</taxon>
        <taxon>Pseudomonadati</taxon>
        <taxon>Pseudomonadota</taxon>
        <taxon>Gammaproteobacteria</taxon>
        <taxon>Enterobacterales</taxon>
        <taxon>Yersiniaceae</taxon>
        <taxon>Yersinia</taxon>
    </lineage>
</organism>
<evidence type="ECO:0000255" key="1">
    <source>
        <dbReference type="HAMAP-Rule" id="MF_01703"/>
    </source>
</evidence>
<evidence type="ECO:0000305" key="2"/>
<dbReference type="EC" id="7.5.2.6" evidence="1"/>
<dbReference type="EMBL" id="AL590842">
    <property type="protein sequence ID" value="CAL20047.1"/>
    <property type="molecule type" value="Genomic_DNA"/>
</dbReference>
<dbReference type="EMBL" id="AE009952">
    <property type="protein sequence ID" value="AAM86329.1"/>
    <property type="molecule type" value="Genomic_DNA"/>
</dbReference>
<dbReference type="EMBL" id="AE017042">
    <property type="protein sequence ID" value="AAS61441.1"/>
    <property type="status" value="ALT_INIT"/>
    <property type="molecule type" value="Genomic_DNA"/>
</dbReference>
<dbReference type="PIR" id="AE0170">
    <property type="entry name" value="AE0170"/>
</dbReference>
<dbReference type="RefSeq" id="WP_002211320.1">
    <property type="nucleotide sequence ID" value="NZ_WUCM01000045.1"/>
</dbReference>
<dbReference type="RefSeq" id="YP_002346418.1">
    <property type="nucleotide sequence ID" value="NC_003143.1"/>
</dbReference>
<dbReference type="SMR" id="Q8ZGA9"/>
<dbReference type="IntAct" id="Q8ZGA9">
    <property type="interactions" value="1"/>
</dbReference>
<dbReference type="STRING" id="214092.YPO1395"/>
<dbReference type="PaxDb" id="214092-YPO1395"/>
<dbReference type="DNASU" id="1147724"/>
<dbReference type="EnsemblBacteria" id="AAS61441">
    <property type="protein sequence ID" value="AAS61441"/>
    <property type="gene ID" value="YP_1198"/>
</dbReference>
<dbReference type="GeneID" id="57977191"/>
<dbReference type="KEGG" id="ype:YPO1395"/>
<dbReference type="KEGG" id="ypk:y2777"/>
<dbReference type="KEGG" id="ypm:YP_1198"/>
<dbReference type="PATRIC" id="fig|214092.21.peg.1718"/>
<dbReference type="eggNOG" id="COG1132">
    <property type="taxonomic scope" value="Bacteria"/>
</dbReference>
<dbReference type="HOGENOM" id="CLU_000604_84_3_6"/>
<dbReference type="OMA" id="MYTGHTL"/>
<dbReference type="OrthoDB" id="9806127at2"/>
<dbReference type="Proteomes" id="UP000000815">
    <property type="component" value="Chromosome"/>
</dbReference>
<dbReference type="Proteomes" id="UP000001019">
    <property type="component" value="Chromosome"/>
</dbReference>
<dbReference type="Proteomes" id="UP000002490">
    <property type="component" value="Chromosome"/>
</dbReference>
<dbReference type="GO" id="GO:0005886">
    <property type="term" value="C:plasma membrane"/>
    <property type="evidence" value="ECO:0007669"/>
    <property type="project" value="UniProtKB-SubCell"/>
</dbReference>
<dbReference type="GO" id="GO:0140359">
    <property type="term" value="F:ABC-type transporter activity"/>
    <property type="evidence" value="ECO:0007669"/>
    <property type="project" value="InterPro"/>
</dbReference>
<dbReference type="GO" id="GO:0005524">
    <property type="term" value="F:ATP binding"/>
    <property type="evidence" value="ECO:0007669"/>
    <property type="project" value="UniProtKB-KW"/>
</dbReference>
<dbReference type="GO" id="GO:0016887">
    <property type="term" value="F:ATP hydrolysis activity"/>
    <property type="evidence" value="ECO:0007669"/>
    <property type="project" value="InterPro"/>
</dbReference>
<dbReference type="GO" id="GO:0034040">
    <property type="term" value="F:ATPase-coupled lipid transmembrane transporter activity"/>
    <property type="evidence" value="ECO:0000318"/>
    <property type="project" value="GO_Central"/>
</dbReference>
<dbReference type="GO" id="GO:0055085">
    <property type="term" value="P:transmembrane transport"/>
    <property type="evidence" value="ECO:0000318"/>
    <property type="project" value="GO_Central"/>
</dbReference>
<dbReference type="CDD" id="cd18552">
    <property type="entry name" value="ABC_6TM_MsbA_like"/>
    <property type="match status" value="1"/>
</dbReference>
<dbReference type="CDD" id="cd03251">
    <property type="entry name" value="ABCC_MsbA"/>
    <property type="match status" value="1"/>
</dbReference>
<dbReference type="FunFam" id="1.20.1560.10:FF:000008">
    <property type="entry name" value="Lipid A export ATP-binding/permease protein MsbA"/>
    <property type="match status" value="1"/>
</dbReference>
<dbReference type="FunFam" id="3.40.50.300:FF:000140">
    <property type="entry name" value="Lipid A export ATP-binding/permease protein MsbA"/>
    <property type="match status" value="1"/>
</dbReference>
<dbReference type="Gene3D" id="1.20.1560.10">
    <property type="entry name" value="ABC transporter type 1, transmembrane domain"/>
    <property type="match status" value="1"/>
</dbReference>
<dbReference type="Gene3D" id="3.40.50.300">
    <property type="entry name" value="P-loop containing nucleotide triphosphate hydrolases"/>
    <property type="match status" value="1"/>
</dbReference>
<dbReference type="InterPro" id="IPR003593">
    <property type="entry name" value="AAA+_ATPase"/>
</dbReference>
<dbReference type="InterPro" id="IPR011527">
    <property type="entry name" value="ABC1_TM_dom"/>
</dbReference>
<dbReference type="InterPro" id="IPR036640">
    <property type="entry name" value="ABC1_TM_sf"/>
</dbReference>
<dbReference type="InterPro" id="IPR003439">
    <property type="entry name" value="ABC_transporter-like_ATP-bd"/>
</dbReference>
<dbReference type="InterPro" id="IPR017871">
    <property type="entry name" value="ABC_transporter-like_CS"/>
</dbReference>
<dbReference type="InterPro" id="IPR011917">
    <property type="entry name" value="ABC_transpr_lipidA"/>
</dbReference>
<dbReference type="InterPro" id="IPR027417">
    <property type="entry name" value="P-loop_NTPase"/>
</dbReference>
<dbReference type="InterPro" id="IPR039421">
    <property type="entry name" value="Type_1_exporter"/>
</dbReference>
<dbReference type="NCBIfam" id="TIGR02203">
    <property type="entry name" value="MsbA_lipidA"/>
    <property type="match status" value="1"/>
</dbReference>
<dbReference type="NCBIfam" id="NF008381">
    <property type="entry name" value="PRK11176.1"/>
    <property type="match status" value="1"/>
</dbReference>
<dbReference type="PANTHER" id="PTHR43394:SF1">
    <property type="entry name" value="ATP-BINDING CASSETTE SUB-FAMILY B MEMBER 10, MITOCHONDRIAL"/>
    <property type="match status" value="1"/>
</dbReference>
<dbReference type="PANTHER" id="PTHR43394">
    <property type="entry name" value="ATP-DEPENDENT PERMEASE MDL1, MITOCHONDRIAL"/>
    <property type="match status" value="1"/>
</dbReference>
<dbReference type="Pfam" id="PF00664">
    <property type="entry name" value="ABC_membrane"/>
    <property type="match status" value="1"/>
</dbReference>
<dbReference type="Pfam" id="PF00005">
    <property type="entry name" value="ABC_tran"/>
    <property type="match status" value="1"/>
</dbReference>
<dbReference type="SMART" id="SM00382">
    <property type="entry name" value="AAA"/>
    <property type="match status" value="1"/>
</dbReference>
<dbReference type="SUPFAM" id="SSF90123">
    <property type="entry name" value="ABC transporter transmembrane region"/>
    <property type="match status" value="1"/>
</dbReference>
<dbReference type="SUPFAM" id="SSF52540">
    <property type="entry name" value="P-loop containing nucleoside triphosphate hydrolases"/>
    <property type="match status" value="1"/>
</dbReference>
<dbReference type="PROSITE" id="PS50929">
    <property type="entry name" value="ABC_TM1F"/>
    <property type="match status" value="1"/>
</dbReference>
<dbReference type="PROSITE" id="PS00211">
    <property type="entry name" value="ABC_TRANSPORTER_1"/>
    <property type="match status" value="1"/>
</dbReference>
<dbReference type="PROSITE" id="PS50893">
    <property type="entry name" value="ABC_TRANSPORTER_2"/>
    <property type="match status" value="1"/>
</dbReference>
<dbReference type="PROSITE" id="PS51239">
    <property type="entry name" value="MSBA"/>
    <property type="match status" value="1"/>
</dbReference>
<protein>
    <recommendedName>
        <fullName evidence="1">ATP-dependent lipid A-core flippase</fullName>
        <ecNumber evidence="1">7.5.2.6</ecNumber>
    </recommendedName>
    <alternativeName>
        <fullName evidence="1">Lipid A export ATP-binding/permease protein MsbA</fullName>
    </alternativeName>
</protein>
<keyword id="KW-0067">ATP-binding</keyword>
<keyword id="KW-0997">Cell inner membrane</keyword>
<keyword id="KW-1003">Cell membrane</keyword>
<keyword id="KW-0445">Lipid transport</keyword>
<keyword id="KW-0472">Membrane</keyword>
<keyword id="KW-0547">Nucleotide-binding</keyword>
<keyword id="KW-1185">Reference proteome</keyword>
<keyword id="KW-1278">Translocase</keyword>
<keyword id="KW-0812">Transmembrane</keyword>
<keyword id="KW-1133">Transmembrane helix</keyword>
<keyword id="KW-0813">Transport</keyword>
<reference key="1">
    <citation type="journal article" date="2001" name="Nature">
        <title>Genome sequence of Yersinia pestis, the causative agent of plague.</title>
        <authorList>
            <person name="Parkhill J."/>
            <person name="Wren B.W."/>
            <person name="Thomson N.R."/>
            <person name="Titball R.W."/>
            <person name="Holden M.T.G."/>
            <person name="Prentice M.B."/>
            <person name="Sebaihia M."/>
            <person name="James K.D."/>
            <person name="Churcher C.M."/>
            <person name="Mungall K.L."/>
            <person name="Baker S."/>
            <person name="Basham D."/>
            <person name="Bentley S.D."/>
            <person name="Brooks K."/>
            <person name="Cerdeno-Tarraga A.-M."/>
            <person name="Chillingworth T."/>
            <person name="Cronin A."/>
            <person name="Davies R.M."/>
            <person name="Davis P."/>
            <person name="Dougan G."/>
            <person name="Feltwell T."/>
            <person name="Hamlin N."/>
            <person name="Holroyd S."/>
            <person name="Jagels K."/>
            <person name="Karlyshev A.V."/>
            <person name="Leather S."/>
            <person name="Moule S."/>
            <person name="Oyston P.C.F."/>
            <person name="Quail M.A."/>
            <person name="Rutherford K.M."/>
            <person name="Simmonds M."/>
            <person name="Skelton J."/>
            <person name="Stevens K."/>
            <person name="Whitehead S."/>
            <person name="Barrell B.G."/>
        </authorList>
    </citation>
    <scope>NUCLEOTIDE SEQUENCE [LARGE SCALE GENOMIC DNA]</scope>
    <source>
        <strain>CO-92 / Biovar Orientalis</strain>
    </source>
</reference>
<reference key="2">
    <citation type="journal article" date="2002" name="J. Bacteriol.">
        <title>Genome sequence of Yersinia pestis KIM.</title>
        <authorList>
            <person name="Deng W."/>
            <person name="Burland V."/>
            <person name="Plunkett G. III"/>
            <person name="Boutin A."/>
            <person name="Mayhew G.F."/>
            <person name="Liss P."/>
            <person name="Perna N.T."/>
            <person name="Rose D.J."/>
            <person name="Mau B."/>
            <person name="Zhou S."/>
            <person name="Schwartz D.C."/>
            <person name="Fetherston J.D."/>
            <person name="Lindler L.E."/>
            <person name="Brubaker R.R."/>
            <person name="Plano G.V."/>
            <person name="Straley S.C."/>
            <person name="McDonough K.A."/>
            <person name="Nilles M.L."/>
            <person name="Matson J.S."/>
            <person name="Blattner F.R."/>
            <person name="Perry R.D."/>
        </authorList>
    </citation>
    <scope>NUCLEOTIDE SEQUENCE [LARGE SCALE GENOMIC DNA]</scope>
    <source>
        <strain>KIM10+ / Biovar Mediaevalis</strain>
    </source>
</reference>
<reference key="3">
    <citation type="journal article" date="2004" name="DNA Res.">
        <title>Complete genome sequence of Yersinia pestis strain 91001, an isolate avirulent to humans.</title>
        <authorList>
            <person name="Song Y."/>
            <person name="Tong Z."/>
            <person name="Wang J."/>
            <person name="Wang L."/>
            <person name="Guo Z."/>
            <person name="Han Y."/>
            <person name="Zhang J."/>
            <person name="Pei D."/>
            <person name="Zhou D."/>
            <person name="Qin H."/>
            <person name="Pang X."/>
            <person name="Han Y."/>
            <person name="Zhai J."/>
            <person name="Li M."/>
            <person name="Cui B."/>
            <person name="Qi Z."/>
            <person name="Jin L."/>
            <person name="Dai R."/>
            <person name="Chen F."/>
            <person name="Li S."/>
            <person name="Ye C."/>
            <person name="Du Z."/>
            <person name="Lin W."/>
            <person name="Wang J."/>
            <person name="Yu J."/>
            <person name="Yang H."/>
            <person name="Wang J."/>
            <person name="Huang P."/>
            <person name="Yang R."/>
        </authorList>
    </citation>
    <scope>NUCLEOTIDE SEQUENCE [LARGE SCALE GENOMIC DNA]</scope>
    <source>
        <strain>91001 / Biovar Mediaevalis</strain>
    </source>
</reference>